<comment type="function">
    <text evidence="1">Catalyzes the formation of 6,7-dimethyl-8-ribityllumazine by condensation of 5-amino-6-(D-ribitylamino)uracil with 3,4-dihydroxy-2-butanone 4-phosphate. This is the penultimate step in the biosynthesis of riboflavin.</text>
</comment>
<comment type="catalytic activity">
    <reaction evidence="1">
        <text>(2S)-2-hydroxy-3-oxobutyl phosphate + 5-amino-6-(D-ribitylamino)uracil = 6,7-dimethyl-8-(1-D-ribityl)lumazine + phosphate + 2 H2O + H(+)</text>
        <dbReference type="Rhea" id="RHEA:26152"/>
        <dbReference type="ChEBI" id="CHEBI:15377"/>
        <dbReference type="ChEBI" id="CHEBI:15378"/>
        <dbReference type="ChEBI" id="CHEBI:15934"/>
        <dbReference type="ChEBI" id="CHEBI:43474"/>
        <dbReference type="ChEBI" id="CHEBI:58201"/>
        <dbReference type="ChEBI" id="CHEBI:58830"/>
        <dbReference type="EC" id="2.5.1.78"/>
    </reaction>
</comment>
<comment type="pathway">
    <text evidence="1">Cofactor biosynthesis; riboflavin biosynthesis; riboflavin from 2-hydroxy-3-oxobutyl phosphate and 5-amino-6-(D-ribitylamino)uracil: step 1/2.</text>
</comment>
<comment type="similarity">
    <text evidence="1">Belongs to the DMRL synthase family.</text>
</comment>
<proteinExistence type="inferred from homology"/>
<accession>C0R5L5</accession>
<gene>
    <name evidence="1" type="primary">ribH</name>
    <name type="ordered locus">WRi_002270</name>
</gene>
<name>RISB_WOLWR</name>
<evidence type="ECO:0000255" key="1">
    <source>
        <dbReference type="HAMAP-Rule" id="MF_00178"/>
    </source>
</evidence>
<protein>
    <recommendedName>
        <fullName evidence="1">6,7-dimethyl-8-ribityllumazine synthase</fullName>
        <shortName evidence="1">DMRL synthase</shortName>
        <shortName evidence="1">LS</shortName>
        <shortName evidence="1">Lumazine synthase</shortName>
        <ecNumber evidence="1">2.5.1.78</ecNumber>
    </recommendedName>
</protein>
<keyword id="KW-0686">Riboflavin biosynthesis</keyword>
<keyword id="KW-0808">Transferase</keyword>
<feature type="chain" id="PRO_1000195517" description="6,7-dimethyl-8-ribityllumazine synthase">
    <location>
        <begin position="1"/>
        <end position="142"/>
    </location>
</feature>
<feature type="active site" description="Proton donor" evidence="1">
    <location>
        <position position="76"/>
    </location>
</feature>
<feature type="binding site" evidence="1">
    <location>
        <position position="11"/>
    </location>
    <ligand>
        <name>5-amino-6-(D-ribitylamino)uracil</name>
        <dbReference type="ChEBI" id="CHEBI:15934"/>
    </ligand>
</feature>
<feature type="binding site" evidence="1">
    <location>
        <begin position="42"/>
        <end position="44"/>
    </location>
    <ligand>
        <name>5-amino-6-(D-ribitylamino)uracil</name>
        <dbReference type="ChEBI" id="CHEBI:15934"/>
    </ligand>
</feature>
<feature type="binding site" evidence="1">
    <location>
        <begin position="68"/>
        <end position="70"/>
    </location>
    <ligand>
        <name>5-amino-6-(D-ribitylamino)uracil</name>
        <dbReference type="ChEBI" id="CHEBI:15934"/>
    </ligand>
</feature>
<feature type="binding site" evidence="1">
    <location>
        <begin position="73"/>
        <end position="74"/>
    </location>
    <ligand>
        <name>(2S)-2-hydroxy-3-oxobutyl phosphate</name>
        <dbReference type="ChEBI" id="CHEBI:58830"/>
    </ligand>
</feature>
<feature type="binding site" evidence="1">
    <location>
        <position position="101"/>
    </location>
    <ligand>
        <name>5-amino-6-(D-ribitylamino)uracil</name>
        <dbReference type="ChEBI" id="CHEBI:15934"/>
    </ligand>
</feature>
<feature type="binding site" evidence="1">
    <location>
        <position position="115"/>
    </location>
    <ligand>
        <name>(2S)-2-hydroxy-3-oxobutyl phosphate</name>
        <dbReference type="ChEBI" id="CHEBI:58830"/>
    </ligand>
</feature>
<sequence length="142" mass="15468">MSRILIVNSIYYTEIANLLLEGAIDKLKGSNASYDVVEVPGTFEIPATILFAVKSGHTNYDGYLALGCVIRGETDHYQYVCKGVIEGLNEVVMHYAIPLGMGVITADSKDKALVRADKNKKNVGGHAASTVLRMIDLHNKLK</sequence>
<reference key="1">
    <citation type="journal article" date="2009" name="Proc. Natl. Acad. Sci. U.S.A.">
        <title>The mosaic genome structure of the Wolbachia wRi strain infecting Drosophila simulans.</title>
        <authorList>
            <person name="Klasson L."/>
            <person name="Westberg J."/>
            <person name="Sapountzis P."/>
            <person name="Naeslund K."/>
            <person name="Lutnaes Y."/>
            <person name="Darby A.C."/>
            <person name="Veneti Z."/>
            <person name="Chen L."/>
            <person name="Braig H.R."/>
            <person name="Garrett R."/>
            <person name="Bourtzis K."/>
            <person name="Andersson S.G."/>
        </authorList>
    </citation>
    <scope>NUCLEOTIDE SEQUENCE [LARGE SCALE GENOMIC DNA]</scope>
    <source>
        <strain>wRi</strain>
    </source>
</reference>
<organism>
    <name type="scientific">Wolbachia sp. subsp. Drosophila simulans (strain wRi)</name>
    <dbReference type="NCBI Taxonomy" id="66084"/>
    <lineage>
        <taxon>Bacteria</taxon>
        <taxon>Pseudomonadati</taxon>
        <taxon>Pseudomonadota</taxon>
        <taxon>Alphaproteobacteria</taxon>
        <taxon>Rickettsiales</taxon>
        <taxon>Anaplasmataceae</taxon>
        <taxon>Wolbachieae</taxon>
        <taxon>Wolbachia</taxon>
    </lineage>
</organism>
<dbReference type="EC" id="2.5.1.78" evidence="1"/>
<dbReference type="EMBL" id="CP001391">
    <property type="protein sequence ID" value="ACN95057.1"/>
    <property type="molecule type" value="Genomic_DNA"/>
</dbReference>
<dbReference type="RefSeq" id="WP_006279647.1">
    <property type="nucleotide sequence ID" value="NZ_MKIF01000141.1"/>
</dbReference>
<dbReference type="SMR" id="C0R5L5"/>
<dbReference type="STRING" id="66084.WRi_002270"/>
<dbReference type="KEGG" id="wri:WRi_002270"/>
<dbReference type="HOGENOM" id="CLU_089358_1_2_5"/>
<dbReference type="UniPathway" id="UPA00275">
    <property type="reaction ID" value="UER00404"/>
</dbReference>
<dbReference type="Proteomes" id="UP000001293">
    <property type="component" value="Chromosome"/>
</dbReference>
<dbReference type="GO" id="GO:0005829">
    <property type="term" value="C:cytosol"/>
    <property type="evidence" value="ECO:0007669"/>
    <property type="project" value="TreeGrafter"/>
</dbReference>
<dbReference type="GO" id="GO:0009349">
    <property type="term" value="C:riboflavin synthase complex"/>
    <property type="evidence" value="ECO:0007669"/>
    <property type="project" value="InterPro"/>
</dbReference>
<dbReference type="GO" id="GO:0000906">
    <property type="term" value="F:6,7-dimethyl-8-ribityllumazine synthase activity"/>
    <property type="evidence" value="ECO:0007669"/>
    <property type="project" value="UniProtKB-UniRule"/>
</dbReference>
<dbReference type="GO" id="GO:0009231">
    <property type="term" value="P:riboflavin biosynthetic process"/>
    <property type="evidence" value="ECO:0007669"/>
    <property type="project" value="UniProtKB-UniRule"/>
</dbReference>
<dbReference type="CDD" id="cd09209">
    <property type="entry name" value="Lumazine_synthase-I"/>
    <property type="match status" value="1"/>
</dbReference>
<dbReference type="Gene3D" id="3.40.50.960">
    <property type="entry name" value="Lumazine/riboflavin synthase"/>
    <property type="match status" value="1"/>
</dbReference>
<dbReference type="HAMAP" id="MF_00178">
    <property type="entry name" value="Lumazine_synth"/>
    <property type="match status" value="1"/>
</dbReference>
<dbReference type="InterPro" id="IPR034964">
    <property type="entry name" value="LS"/>
</dbReference>
<dbReference type="InterPro" id="IPR002180">
    <property type="entry name" value="LS/RS"/>
</dbReference>
<dbReference type="InterPro" id="IPR036467">
    <property type="entry name" value="LS/RS_sf"/>
</dbReference>
<dbReference type="NCBIfam" id="TIGR00114">
    <property type="entry name" value="lumazine-synth"/>
    <property type="match status" value="1"/>
</dbReference>
<dbReference type="NCBIfam" id="NF000814">
    <property type="entry name" value="PRK00061.2-2"/>
    <property type="match status" value="1"/>
</dbReference>
<dbReference type="PANTHER" id="PTHR21058:SF0">
    <property type="entry name" value="6,7-DIMETHYL-8-RIBITYLLUMAZINE SYNTHASE"/>
    <property type="match status" value="1"/>
</dbReference>
<dbReference type="PANTHER" id="PTHR21058">
    <property type="entry name" value="6,7-DIMETHYL-8-RIBITYLLUMAZINE SYNTHASE DMRL SYNTHASE LUMAZINE SYNTHASE"/>
    <property type="match status" value="1"/>
</dbReference>
<dbReference type="Pfam" id="PF00885">
    <property type="entry name" value="DMRL_synthase"/>
    <property type="match status" value="1"/>
</dbReference>
<dbReference type="SUPFAM" id="SSF52121">
    <property type="entry name" value="Lumazine synthase"/>
    <property type="match status" value="1"/>
</dbReference>